<keyword id="KW-1185">Reference proteome</keyword>
<keyword id="KW-0678">Repressor</keyword>
<keyword id="KW-0346">Stress response</keyword>
<keyword id="KW-0804">Transcription</keyword>
<keyword id="KW-0805">Transcription regulation</keyword>
<accession>Q6KIH9</accession>
<organism>
    <name type="scientific">Mycoplasma mobile (strain ATCC 43663 / 163K / NCTC 11711)</name>
    <name type="common">Mesomycoplasma mobile</name>
    <dbReference type="NCBI Taxonomy" id="267748"/>
    <lineage>
        <taxon>Bacteria</taxon>
        <taxon>Bacillati</taxon>
        <taxon>Mycoplasmatota</taxon>
        <taxon>Mycoplasmoidales</taxon>
        <taxon>Metamycoplasmataceae</taxon>
        <taxon>Mesomycoplasma</taxon>
    </lineage>
</organism>
<evidence type="ECO:0000255" key="1">
    <source>
        <dbReference type="HAMAP-Rule" id="MF_00081"/>
    </source>
</evidence>
<proteinExistence type="inferred from homology"/>
<feature type="chain" id="PRO_0000182506" description="Heat-inducible transcription repressor HrcA">
    <location>
        <begin position="1"/>
        <end position="332"/>
    </location>
</feature>
<comment type="function">
    <text evidence="1">Negative regulator of class I heat shock genes (grpE-dnaK-dnaJ and groELS operons). Prevents heat-shock induction of these operons.</text>
</comment>
<comment type="similarity">
    <text evidence="1">Belongs to the HrcA family.</text>
</comment>
<protein>
    <recommendedName>
        <fullName evidence="1">Heat-inducible transcription repressor HrcA</fullName>
    </recommendedName>
</protein>
<sequence>MYMKEKRDEILLKIIDLYIKSGQPVSSKQLISEYKLAVSSATIRNIMADLENEGFLEKTHTSSGRIPSISGYKFFAEHSKSKTNELLESKLKEIFSKRYLSIDVTLDEAAKAINEIIGLTLVTSSNVNTEVLKSIQLIELNNYSATIILVTSTGQVANKTIDLTNFQDIKLEDVRIAIRLFKERLINTSLINLREKALALKPILSKYIKNYETILQSFIGNVFEFENKNHVYGKSNIIKQEGIDRLHLTQILDLIENNSIWNMIESKVEEDETLKIDVRNSNISLISKKIFVNNTTKEISVIGSNRMDYISAKSAIALLESFIKPKFSKKNN</sequence>
<name>HRCA_MYCM1</name>
<reference key="1">
    <citation type="journal article" date="2004" name="Genome Res.">
        <title>The complete genome and proteome of Mycoplasma mobile.</title>
        <authorList>
            <person name="Jaffe J.D."/>
            <person name="Stange-Thomann N."/>
            <person name="Smith C."/>
            <person name="DeCaprio D."/>
            <person name="Fisher S."/>
            <person name="Butler J."/>
            <person name="Calvo S."/>
            <person name="Elkins T."/>
            <person name="FitzGerald M.G."/>
            <person name="Hafez N."/>
            <person name="Kodira C.D."/>
            <person name="Major J."/>
            <person name="Wang S."/>
            <person name="Wilkinson J."/>
            <person name="Nicol R."/>
            <person name="Nusbaum C."/>
            <person name="Birren B."/>
            <person name="Berg H.C."/>
            <person name="Church G.M."/>
        </authorList>
    </citation>
    <scope>NUCLEOTIDE SEQUENCE [LARGE SCALE GENOMIC DNA]</scope>
    <source>
        <strain>ATCC 43663 / NCTC 11711 / 163 K</strain>
    </source>
</reference>
<dbReference type="EMBL" id="AE017308">
    <property type="protein sequence ID" value="AAT27597.1"/>
    <property type="molecule type" value="Genomic_DNA"/>
</dbReference>
<dbReference type="SMR" id="Q6KIH9"/>
<dbReference type="STRING" id="267748.MMOB1110"/>
<dbReference type="KEGG" id="mmo:MMOB1110"/>
<dbReference type="eggNOG" id="COG1420">
    <property type="taxonomic scope" value="Bacteria"/>
</dbReference>
<dbReference type="HOGENOM" id="CLU_050019_1_0_14"/>
<dbReference type="Proteomes" id="UP000009072">
    <property type="component" value="Chromosome"/>
</dbReference>
<dbReference type="GO" id="GO:0003677">
    <property type="term" value="F:DNA binding"/>
    <property type="evidence" value="ECO:0007669"/>
    <property type="project" value="InterPro"/>
</dbReference>
<dbReference type="GO" id="GO:0045892">
    <property type="term" value="P:negative regulation of DNA-templated transcription"/>
    <property type="evidence" value="ECO:0007669"/>
    <property type="project" value="UniProtKB-UniRule"/>
</dbReference>
<dbReference type="Gene3D" id="3.30.450.40">
    <property type="match status" value="1"/>
</dbReference>
<dbReference type="Gene3D" id="3.30.390.60">
    <property type="entry name" value="Heat-inducible transcription repressor hrca homolog, domain 3"/>
    <property type="match status" value="1"/>
</dbReference>
<dbReference type="Gene3D" id="1.10.10.10">
    <property type="entry name" value="Winged helix-like DNA-binding domain superfamily/Winged helix DNA-binding domain"/>
    <property type="match status" value="1"/>
</dbReference>
<dbReference type="HAMAP" id="MF_00081">
    <property type="entry name" value="HrcA"/>
    <property type="match status" value="1"/>
</dbReference>
<dbReference type="InterPro" id="IPR029016">
    <property type="entry name" value="GAF-like_dom_sf"/>
</dbReference>
<dbReference type="InterPro" id="IPR002571">
    <property type="entry name" value="HrcA"/>
</dbReference>
<dbReference type="InterPro" id="IPR021153">
    <property type="entry name" value="HrcA_C"/>
</dbReference>
<dbReference type="InterPro" id="IPR036388">
    <property type="entry name" value="WH-like_DNA-bd_sf"/>
</dbReference>
<dbReference type="InterPro" id="IPR036390">
    <property type="entry name" value="WH_DNA-bd_sf"/>
</dbReference>
<dbReference type="InterPro" id="IPR023120">
    <property type="entry name" value="WHTH_transcript_rep_HrcA_IDD"/>
</dbReference>
<dbReference type="NCBIfam" id="TIGR00331">
    <property type="entry name" value="hrcA"/>
    <property type="match status" value="1"/>
</dbReference>
<dbReference type="PANTHER" id="PTHR34824">
    <property type="entry name" value="HEAT-INDUCIBLE TRANSCRIPTION REPRESSOR HRCA"/>
    <property type="match status" value="1"/>
</dbReference>
<dbReference type="PANTHER" id="PTHR34824:SF1">
    <property type="entry name" value="HEAT-INDUCIBLE TRANSCRIPTION REPRESSOR HRCA"/>
    <property type="match status" value="1"/>
</dbReference>
<dbReference type="Pfam" id="PF01628">
    <property type="entry name" value="HrcA"/>
    <property type="match status" value="1"/>
</dbReference>
<dbReference type="PIRSF" id="PIRSF005485">
    <property type="entry name" value="HrcA"/>
    <property type="match status" value="1"/>
</dbReference>
<dbReference type="SUPFAM" id="SSF55781">
    <property type="entry name" value="GAF domain-like"/>
    <property type="match status" value="1"/>
</dbReference>
<dbReference type="SUPFAM" id="SSF46785">
    <property type="entry name" value="Winged helix' DNA-binding domain"/>
    <property type="match status" value="1"/>
</dbReference>
<gene>
    <name evidence="1" type="primary">hrcA</name>
    <name type="ordered locus">MMOB1110</name>
</gene>